<gene>
    <name type="primary">A40_5R</name>
</gene>
<sequence length="62" mass="7143">MDSFSSLFMKLCCISTDKTGSKKSDRKNKNKIKDYMEHDYYKITIVPGSSSTSTSSWYYTHA</sequence>
<organismHost>
    <name type="scientific">Homo sapiens</name>
    <name type="common">Human</name>
    <dbReference type="NCBI Taxonomy" id="9606"/>
</organismHost>
<comment type="similarity">
    <text evidence="1">Belongs to the orthopoxviruses A37.5 protein family.</text>
</comment>
<reference key="1">
    <citation type="journal article" date="1993" name="FEBS Lett.">
        <title>Genes of variola and vaccinia viruses necessary to overcome the host protective mechanisms.</title>
        <authorList>
            <person name="Shchelkunov S.N."/>
            <person name="Blinov V.M."/>
            <person name="Sandakhchiev L.S."/>
        </authorList>
    </citation>
    <scope>NUCLEOTIDE SEQUENCE [GENOMIC DNA]</scope>
</reference>
<reference key="2">
    <citation type="journal article" date="1994" name="Virus Res.">
        <title>Analysis of the nucleotide sequence of 53 kbp from the right terminus of the genome of variola major virus strain India-1967.</title>
        <authorList>
            <person name="Shchelkunov S.N."/>
            <person name="Blinov V.M."/>
            <person name="Resenchuk S.M."/>
            <person name="Totmenin A.V."/>
            <person name="Olenina L.V."/>
            <person name="Chirikova G.B."/>
            <person name="Sandakhchiev L.S."/>
        </authorList>
    </citation>
    <scope>NUCLEOTIDE SEQUENCE [GENOMIC DNA]</scope>
</reference>
<reference key="3">
    <citation type="journal article" date="1995" name="Virus Genes">
        <title>Two types of deletions in orthopoxvirus genomes.</title>
        <authorList>
            <person name="Shchelkunov S.N."/>
            <person name="Totmenin A.V."/>
        </authorList>
    </citation>
    <scope>NUCLEOTIDE SEQUENCE [GENOMIC DNA]</scope>
</reference>
<reference key="4">
    <citation type="journal article" date="1996" name="Virus Res.">
        <title>Analysis of the nucleotide sequence of 23.8 kbp from the left terminus of the genome of variola major virus strain India-1967.</title>
        <authorList>
            <person name="Shchelkunov S.N."/>
            <person name="Totmenin A.V."/>
            <person name="Sandakhchiev L.S."/>
        </authorList>
    </citation>
    <scope>NUCLEOTIDE SEQUENCE [GENOMIC DNA]</scope>
</reference>
<accession>Q89183</accession>
<protein>
    <recommendedName>
        <fullName>Protein A37.5 homolog</fullName>
    </recommendedName>
</protein>
<keyword id="KW-1185">Reference proteome</keyword>
<feature type="chain" id="PRO_0000412616" description="Protein A37.5 homolog">
    <location>
        <begin position="1"/>
        <end position="62"/>
    </location>
</feature>
<dbReference type="EMBL" id="X69198">
    <property type="protein sequence ID" value="CAA49086.1"/>
    <property type="molecule type" value="Genomic_DNA"/>
</dbReference>
<dbReference type="PIR" id="H72168">
    <property type="entry name" value="H72168"/>
</dbReference>
<dbReference type="RefSeq" id="NP_042190.1">
    <property type="nucleotide sequence ID" value="NC_001611.1"/>
</dbReference>
<dbReference type="GeneID" id="1486521"/>
<dbReference type="KEGG" id="vg:1486521"/>
<dbReference type="Proteomes" id="UP000002060">
    <property type="component" value="Segment"/>
</dbReference>
<proteinExistence type="inferred from homology"/>
<organism>
    <name type="scientific">Variola virus (isolate Human/India/Ind3/1967)</name>
    <name type="common">VARV</name>
    <name type="synonym">Smallpox virus</name>
    <dbReference type="NCBI Taxonomy" id="587200"/>
    <lineage>
        <taxon>Viruses</taxon>
        <taxon>Varidnaviria</taxon>
        <taxon>Bamfordvirae</taxon>
        <taxon>Nucleocytoviricota</taxon>
        <taxon>Pokkesviricetes</taxon>
        <taxon>Chitovirales</taxon>
        <taxon>Poxviridae</taxon>
        <taxon>Chordopoxvirinae</taxon>
        <taxon>Orthopoxvirus</taxon>
        <taxon>Variola virus</taxon>
    </lineage>
</organism>
<evidence type="ECO:0000305" key="1"/>
<name>A375_VAR67</name>